<geneLocation type="chloroplast"/>
<dbReference type="EC" id="2.7.7.6" evidence="1"/>
<dbReference type="EMBL" id="EF115541">
    <property type="protein sequence ID" value="ABK79403.1"/>
    <property type="molecule type" value="Genomic_DNA"/>
</dbReference>
<dbReference type="RefSeq" id="YP_010144415.1">
    <property type="nucleotide sequence ID" value="NC_056985.1"/>
</dbReference>
<dbReference type="RefSeq" id="YP_874643.1">
    <property type="nucleotide sequence ID" value="NC_008590.1"/>
</dbReference>
<dbReference type="SMR" id="A1E9I1"/>
<dbReference type="GeneID" id="4525093"/>
<dbReference type="GeneID" id="67140705"/>
<dbReference type="OMA" id="FMTWEGY"/>
<dbReference type="GO" id="GO:0009507">
    <property type="term" value="C:chloroplast"/>
    <property type="evidence" value="ECO:0007669"/>
    <property type="project" value="UniProtKB-SubCell"/>
</dbReference>
<dbReference type="GO" id="GO:0000428">
    <property type="term" value="C:DNA-directed RNA polymerase complex"/>
    <property type="evidence" value="ECO:0007669"/>
    <property type="project" value="UniProtKB-KW"/>
</dbReference>
<dbReference type="GO" id="GO:0005739">
    <property type="term" value="C:mitochondrion"/>
    <property type="evidence" value="ECO:0007669"/>
    <property type="project" value="GOC"/>
</dbReference>
<dbReference type="GO" id="GO:0003677">
    <property type="term" value="F:DNA binding"/>
    <property type="evidence" value="ECO:0007669"/>
    <property type="project" value="UniProtKB-UniRule"/>
</dbReference>
<dbReference type="GO" id="GO:0003899">
    <property type="term" value="F:DNA-directed RNA polymerase activity"/>
    <property type="evidence" value="ECO:0007669"/>
    <property type="project" value="UniProtKB-UniRule"/>
</dbReference>
<dbReference type="GO" id="GO:0032549">
    <property type="term" value="F:ribonucleoside binding"/>
    <property type="evidence" value="ECO:0007669"/>
    <property type="project" value="InterPro"/>
</dbReference>
<dbReference type="GO" id="GO:0006351">
    <property type="term" value="P:DNA-templated transcription"/>
    <property type="evidence" value="ECO:0007669"/>
    <property type="project" value="UniProtKB-UniRule"/>
</dbReference>
<dbReference type="CDD" id="cd00653">
    <property type="entry name" value="RNA_pol_B_RPB2"/>
    <property type="match status" value="1"/>
</dbReference>
<dbReference type="Gene3D" id="2.40.50.100">
    <property type="match status" value="1"/>
</dbReference>
<dbReference type="Gene3D" id="2.40.50.150">
    <property type="match status" value="1"/>
</dbReference>
<dbReference type="Gene3D" id="3.90.1100.10">
    <property type="match status" value="1"/>
</dbReference>
<dbReference type="Gene3D" id="2.30.150.10">
    <property type="entry name" value="DNA-directed RNA polymerase, beta subunit, external 1 domain"/>
    <property type="match status" value="1"/>
</dbReference>
<dbReference type="Gene3D" id="2.40.270.10">
    <property type="entry name" value="DNA-directed RNA polymerase, subunit 2, domain 6"/>
    <property type="match status" value="2"/>
</dbReference>
<dbReference type="Gene3D" id="3.90.1800.10">
    <property type="entry name" value="RNA polymerase alpha subunit dimerisation domain"/>
    <property type="match status" value="1"/>
</dbReference>
<dbReference type="Gene3D" id="3.90.1110.10">
    <property type="entry name" value="RNA polymerase Rpb2, domain 2"/>
    <property type="match status" value="1"/>
</dbReference>
<dbReference type="HAMAP" id="MF_01321">
    <property type="entry name" value="RNApol_bact_RpoB"/>
    <property type="match status" value="1"/>
</dbReference>
<dbReference type="InterPro" id="IPR042107">
    <property type="entry name" value="DNA-dir_RNA_pol_bsu_ext_1_sf"/>
</dbReference>
<dbReference type="InterPro" id="IPR015712">
    <property type="entry name" value="DNA-dir_RNA_pol_su2"/>
</dbReference>
<dbReference type="InterPro" id="IPR007120">
    <property type="entry name" value="DNA-dir_RNAP_su2_dom"/>
</dbReference>
<dbReference type="InterPro" id="IPR037033">
    <property type="entry name" value="DNA-dir_RNAP_su2_hyb_sf"/>
</dbReference>
<dbReference type="InterPro" id="IPR010243">
    <property type="entry name" value="RNA_pol_bsu_bac"/>
</dbReference>
<dbReference type="InterPro" id="IPR007121">
    <property type="entry name" value="RNA_pol_bsu_CS"/>
</dbReference>
<dbReference type="InterPro" id="IPR007642">
    <property type="entry name" value="RNA_pol_Rpb2_2"/>
</dbReference>
<dbReference type="InterPro" id="IPR037034">
    <property type="entry name" value="RNA_pol_Rpb2_2_sf"/>
</dbReference>
<dbReference type="InterPro" id="IPR007645">
    <property type="entry name" value="RNA_pol_Rpb2_3"/>
</dbReference>
<dbReference type="InterPro" id="IPR007641">
    <property type="entry name" value="RNA_pol_Rpb2_7"/>
</dbReference>
<dbReference type="InterPro" id="IPR014724">
    <property type="entry name" value="RNA_pol_RPB2_OB-fold"/>
</dbReference>
<dbReference type="NCBIfam" id="NF001616">
    <property type="entry name" value="PRK00405.1"/>
    <property type="match status" value="1"/>
</dbReference>
<dbReference type="PANTHER" id="PTHR20856">
    <property type="entry name" value="DNA-DIRECTED RNA POLYMERASE I SUBUNIT 2"/>
    <property type="match status" value="1"/>
</dbReference>
<dbReference type="Pfam" id="PF04561">
    <property type="entry name" value="RNA_pol_Rpb2_2"/>
    <property type="match status" value="1"/>
</dbReference>
<dbReference type="Pfam" id="PF04565">
    <property type="entry name" value="RNA_pol_Rpb2_3"/>
    <property type="match status" value="1"/>
</dbReference>
<dbReference type="Pfam" id="PF00562">
    <property type="entry name" value="RNA_pol_Rpb2_6"/>
    <property type="match status" value="1"/>
</dbReference>
<dbReference type="Pfam" id="PF04560">
    <property type="entry name" value="RNA_pol_Rpb2_7"/>
    <property type="match status" value="1"/>
</dbReference>
<dbReference type="SUPFAM" id="SSF64484">
    <property type="entry name" value="beta and beta-prime subunits of DNA dependent RNA-polymerase"/>
    <property type="match status" value="1"/>
</dbReference>
<dbReference type="PROSITE" id="PS01166">
    <property type="entry name" value="RNA_POL_BETA"/>
    <property type="match status" value="1"/>
</dbReference>
<gene>
    <name evidence="1" type="primary">rpoB</name>
</gene>
<sequence length="1076" mass="121653">MLRNGNEGMSTIPGFSQIQFEGFFRFINQALAEELDKFPTIKDPDHEIAFQLFAKGYQLLEPSIKERDAVYESLTYSSELYVSARLIFGFDVQKQTISIGNIPIMNSLGTFIINGIYRIVINQILLSPGIYYRSELDHKGISIYTGTIISDWGGRSELAIDKKERIWARVSRKQKISILVLSSAMGSNLREILDNVSYPEIFLSFPNAKEKKRIESKEKAILEFYQQFACVGGDLVFSESLCEELQKKFFQQKCELGRIGRRNMNRRLNLDIPQNNTFLLPRDVLAATDHLIGMKFGTGILDDDDMNHLKNKRIRSVADLLQDQFGLALGRLQHAVQKTIRRVFIRQSKPTPQTLVTPTSTSILLITTYETFFGTYPLSQVFDQTNPLTQTVHGRKVSCLGPGGLTGRTASFRSRDIHPSHYGRICPIDTSEGINVGLTGSLAIHARIDHLWGSIESPFYEISAEKAKEKKERQVVYLSPNRDEYYMIAAGNSLSLNQGIQEEQVVPARYRQEFLTIAWEQIHVRSIFPFQYFSIGGSLIPFIEHNDANRALMSSNMQRQAVPLSRSEKCIVGTGLERQTALDSRVSVIAEREGKIISTDSHKILLSSSGKTISIPLVNHRRSNKNTCMHQKPRVPRGKSIKKGQILAEGAATVGGELALGKNVLVAYMPWEGYNFEDAVLISERLVYEDIYTSFHIRKYEIQTDTTSQGSAEKITKEIPHLEEHLLRNLDKNGVVRLGSWVETGDILVGKLTPQIASESSYIAEAGLLRAIFGLEVSTSKETSLKLPIGGRGRVIDVKWIQRDPLDIMVRVYILQKREIKVGDKVAGRHGNKGIISKILPRQDMPYLQDGTPVDMVFNPLGVPSRMNVGQIFESSLGLAGDLLKKHYRIAPFDERYEQEASRKLVFSELYEASKETKNPWVFEPEYPGKSRIFDGRTGDPFEQPVLIGKSYILKLIHQVDEKIHGRSTGPYSLVTQQPVRGRAKQGGQRVGEMEVWALEGFGVAHILQEILTYKSDHLIARQEILNATIWGKRIPNHEDPPESFRVLVRELRSLALELNHFLVSEKNFQVNREEV</sequence>
<feature type="chain" id="PRO_0000300444" description="DNA-directed RNA polymerase subunit beta">
    <location>
        <begin position="1"/>
        <end position="1076"/>
    </location>
</feature>
<protein>
    <recommendedName>
        <fullName evidence="1">DNA-directed RNA polymerase subunit beta</fullName>
        <ecNumber evidence="1">2.7.7.6</ecNumber>
    </recommendedName>
    <alternativeName>
        <fullName evidence="1">PEP</fullName>
    </alternativeName>
    <alternativeName>
        <fullName evidence="1">Plastid-encoded RNA polymerase subunit beta</fullName>
        <shortName evidence="1">RNA polymerase subunit beta</shortName>
    </alternativeName>
</protein>
<reference key="1">
    <citation type="journal article" date="2007" name="Theor. Appl. Genet.">
        <title>Complete chloroplast genome sequences of Hordeum vulgare, Sorghum bicolor and Agrostis stolonifera, and comparative analyses with other grass genomes.</title>
        <authorList>
            <person name="Saski C."/>
            <person name="Lee S.-B."/>
            <person name="Fjellheim S."/>
            <person name="Guda C."/>
            <person name="Jansen R.K."/>
            <person name="Luo H."/>
            <person name="Tomkins J."/>
            <person name="Rognli O.A."/>
            <person name="Daniell H."/>
            <person name="Clarke J.L."/>
        </authorList>
    </citation>
    <scope>NUCLEOTIDE SEQUENCE [LARGE SCALE GENOMIC DNA]</scope>
    <source>
        <strain>cv. Morex</strain>
    </source>
</reference>
<keyword id="KW-0150">Chloroplast</keyword>
<keyword id="KW-0240">DNA-directed RNA polymerase</keyword>
<keyword id="KW-0548">Nucleotidyltransferase</keyword>
<keyword id="KW-0934">Plastid</keyword>
<keyword id="KW-0804">Transcription</keyword>
<keyword id="KW-0808">Transferase</keyword>
<comment type="function">
    <text evidence="1">DNA-dependent RNA polymerase catalyzes the transcription of DNA into RNA using the four ribonucleoside triphosphates as substrates.</text>
</comment>
<comment type="catalytic activity">
    <reaction evidence="1">
        <text>RNA(n) + a ribonucleoside 5'-triphosphate = RNA(n+1) + diphosphate</text>
        <dbReference type="Rhea" id="RHEA:21248"/>
        <dbReference type="Rhea" id="RHEA-COMP:14527"/>
        <dbReference type="Rhea" id="RHEA-COMP:17342"/>
        <dbReference type="ChEBI" id="CHEBI:33019"/>
        <dbReference type="ChEBI" id="CHEBI:61557"/>
        <dbReference type="ChEBI" id="CHEBI:140395"/>
        <dbReference type="EC" id="2.7.7.6"/>
    </reaction>
</comment>
<comment type="subunit">
    <text evidence="1">In plastids the minimal PEP RNA polymerase catalytic core is composed of four subunits: alpha, beta, beta', and beta''. When a (nuclear-encoded) sigma factor is associated with the core the holoenzyme is formed, which can initiate transcription.</text>
</comment>
<comment type="subcellular location">
    <subcellularLocation>
        <location>Plastid</location>
        <location>Chloroplast</location>
    </subcellularLocation>
</comment>
<comment type="similarity">
    <text evidence="1">Belongs to the RNA polymerase beta chain family.</text>
</comment>
<evidence type="ECO:0000255" key="1">
    <source>
        <dbReference type="HAMAP-Rule" id="MF_01321"/>
    </source>
</evidence>
<name>RPOB_HORVU</name>
<accession>A1E9I1</accession>
<organism>
    <name type="scientific">Hordeum vulgare</name>
    <name type="common">Barley</name>
    <dbReference type="NCBI Taxonomy" id="4513"/>
    <lineage>
        <taxon>Eukaryota</taxon>
        <taxon>Viridiplantae</taxon>
        <taxon>Streptophyta</taxon>
        <taxon>Embryophyta</taxon>
        <taxon>Tracheophyta</taxon>
        <taxon>Spermatophyta</taxon>
        <taxon>Magnoliopsida</taxon>
        <taxon>Liliopsida</taxon>
        <taxon>Poales</taxon>
        <taxon>Poaceae</taxon>
        <taxon>BOP clade</taxon>
        <taxon>Pooideae</taxon>
        <taxon>Triticodae</taxon>
        <taxon>Triticeae</taxon>
        <taxon>Hordeinae</taxon>
        <taxon>Hordeum</taxon>
    </lineage>
</organism>
<proteinExistence type="inferred from homology"/>